<feature type="chain" id="PRO_0000057083" description="Uncharacterized Nudix hydrolase lin0387">
    <location>
        <begin position="1"/>
        <end position="169"/>
    </location>
</feature>
<feature type="domain" description="Nudix hydrolase" evidence="2">
    <location>
        <begin position="28"/>
        <end position="157"/>
    </location>
</feature>
<feature type="short sequence motif" description="Nudix box">
    <location>
        <begin position="65"/>
        <end position="87"/>
    </location>
</feature>
<feature type="binding site" evidence="1">
    <location>
        <position position="81"/>
    </location>
    <ligand>
        <name>Mg(2+)</name>
        <dbReference type="ChEBI" id="CHEBI:18420"/>
    </ligand>
</feature>
<feature type="binding site" evidence="1">
    <location>
        <position position="85"/>
    </location>
    <ligand>
        <name>Mg(2+)</name>
        <dbReference type="ChEBI" id="CHEBI:18420"/>
    </ligand>
</feature>
<keyword id="KW-0378">Hydrolase</keyword>
<keyword id="KW-0460">Magnesium</keyword>
<keyword id="KW-0479">Metal-binding</keyword>
<evidence type="ECO:0000250" key="1"/>
<evidence type="ECO:0000255" key="2">
    <source>
        <dbReference type="PROSITE-ProRule" id="PRU00794"/>
    </source>
</evidence>
<evidence type="ECO:0000305" key="3"/>
<reference key="1">
    <citation type="journal article" date="2001" name="Science">
        <title>Comparative genomics of Listeria species.</title>
        <authorList>
            <person name="Glaser P."/>
            <person name="Frangeul L."/>
            <person name="Buchrieser C."/>
            <person name="Rusniok C."/>
            <person name="Amend A."/>
            <person name="Baquero F."/>
            <person name="Berche P."/>
            <person name="Bloecker H."/>
            <person name="Brandt P."/>
            <person name="Chakraborty T."/>
            <person name="Charbit A."/>
            <person name="Chetouani F."/>
            <person name="Couve E."/>
            <person name="de Daruvar A."/>
            <person name="Dehoux P."/>
            <person name="Domann E."/>
            <person name="Dominguez-Bernal G."/>
            <person name="Duchaud E."/>
            <person name="Durant L."/>
            <person name="Dussurget O."/>
            <person name="Entian K.-D."/>
            <person name="Fsihi H."/>
            <person name="Garcia-del Portillo F."/>
            <person name="Garrido P."/>
            <person name="Gautier L."/>
            <person name="Goebel W."/>
            <person name="Gomez-Lopez N."/>
            <person name="Hain T."/>
            <person name="Hauf J."/>
            <person name="Jackson D."/>
            <person name="Jones L.-M."/>
            <person name="Kaerst U."/>
            <person name="Kreft J."/>
            <person name="Kuhn M."/>
            <person name="Kunst F."/>
            <person name="Kurapkat G."/>
            <person name="Madueno E."/>
            <person name="Maitournam A."/>
            <person name="Mata Vicente J."/>
            <person name="Ng E."/>
            <person name="Nedjari H."/>
            <person name="Nordsiek G."/>
            <person name="Novella S."/>
            <person name="de Pablos B."/>
            <person name="Perez-Diaz J.-C."/>
            <person name="Purcell R."/>
            <person name="Remmel B."/>
            <person name="Rose M."/>
            <person name="Schlueter T."/>
            <person name="Simoes N."/>
            <person name="Tierrez A."/>
            <person name="Vazquez-Boland J.-A."/>
            <person name="Voss H."/>
            <person name="Wehland J."/>
            <person name="Cossart P."/>
        </authorList>
    </citation>
    <scope>NUCLEOTIDE SEQUENCE [LARGE SCALE GENOMIC DNA]</scope>
    <source>
        <strain>ATCC BAA-680 / CLIP 11262</strain>
    </source>
</reference>
<comment type="cofactor">
    <cofactor evidence="1">
        <name>Mg(2+)</name>
        <dbReference type="ChEBI" id="CHEBI:18420"/>
    </cofactor>
</comment>
<comment type="similarity">
    <text evidence="3">Belongs to the Nudix hydrolase family.</text>
</comment>
<organism>
    <name type="scientific">Listeria innocua serovar 6a (strain ATCC BAA-680 / CLIP 11262)</name>
    <dbReference type="NCBI Taxonomy" id="272626"/>
    <lineage>
        <taxon>Bacteria</taxon>
        <taxon>Bacillati</taxon>
        <taxon>Bacillota</taxon>
        <taxon>Bacilli</taxon>
        <taxon>Bacillales</taxon>
        <taxon>Listeriaceae</taxon>
        <taxon>Listeria</taxon>
    </lineage>
</organism>
<accession>Q92ES1</accession>
<proteinExistence type="inferred from homology"/>
<protein>
    <recommendedName>
        <fullName>Uncharacterized Nudix hydrolase lin0387</fullName>
        <ecNumber>3.6.-.-</ecNumber>
    </recommendedName>
</protein>
<name>Y387_LISIN</name>
<gene>
    <name type="ordered locus">lin0387</name>
</gene>
<sequence>MEEWDLLNENRELTRKTHIRGEKLAPGELHLVVHVCIFNEKGQLLIQKRQKDKEGWPNYWDLSAAGSALKGETSRQAAEREVKEELGMTIDLSNTRAKFSYHFEAGFDDYWFITKDVELSDLTLQTEEVADVRFVTKEKLEALRSSGEFIPYFFLNQLFELKNATTIHF</sequence>
<dbReference type="EC" id="3.6.-.-"/>
<dbReference type="EMBL" id="AL596164">
    <property type="protein sequence ID" value="CAC95620.1"/>
    <property type="molecule type" value="Genomic_DNA"/>
</dbReference>
<dbReference type="PIR" id="AD1481">
    <property type="entry name" value="AD1481"/>
</dbReference>
<dbReference type="RefSeq" id="WP_010990375.1">
    <property type="nucleotide sequence ID" value="NC_003212.1"/>
</dbReference>
<dbReference type="SMR" id="Q92ES1"/>
<dbReference type="STRING" id="272626.gene:17564714"/>
<dbReference type="KEGG" id="lin:lin0387"/>
<dbReference type="eggNOG" id="COG1443">
    <property type="taxonomic scope" value="Bacteria"/>
</dbReference>
<dbReference type="HOGENOM" id="CLU_060552_1_1_9"/>
<dbReference type="OrthoDB" id="9786032at2"/>
<dbReference type="Proteomes" id="UP000002513">
    <property type="component" value="Chromosome"/>
</dbReference>
<dbReference type="GO" id="GO:0016787">
    <property type="term" value="F:hydrolase activity"/>
    <property type="evidence" value="ECO:0007669"/>
    <property type="project" value="UniProtKB-KW"/>
</dbReference>
<dbReference type="GO" id="GO:0046872">
    <property type="term" value="F:metal ion binding"/>
    <property type="evidence" value="ECO:0007669"/>
    <property type="project" value="UniProtKB-KW"/>
</dbReference>
<dbReference type="CDD" id="cd04693">
    <property type="entry name" value="NUDIX_Hydrolase"/>
    <property type="match status" value="1"/>
</dbReference>
<dbReference type="Gene3D" id="3.90.79.10">
    <property type="entry name" value="Nucleoside Triphosphate Pyrophosphohydrolase"/>
    <property type="match status" value="1"/>
</dbReference>
<dbReference type="InterPro" id="IPR015797">
    <property type="entry name" value="NUDIX_hydrolase-like_dom_sf"/>
</dbReference>
<dbReference type="InterPro" id="IPR020084">
    <property type="entry name" value="NUDIX_hydrolase_CS"/>
</dbReference>
<dbReference type="InterPro" id="IPR000086">
    <property type="entry name" value="NUDIX_hydrolase_dom"/>
</dbReference>
<dbReference type="PANTHER" id="PTHR10885">
    <property type="entry name" value="ISOPENTENYL-DIPHOSPHATE DELTA-ISOMERASE"/>
    <property type="match status" value="1"/>
</dbReference>
<dbReference type="PANTHER" id="PTHR10885:SF0">
    <property type="entry name" value="ISOPENTENYL-DIPHOSPHATE DELTA-ISOMERASE"/>
    <property type="match status" value="1"/>
</dbReference>
<dbReference type="Pfam" id="PF00293">
    <property type="entry name" value="NUDIX"/>
    <property type="match status" value="1"/>
</dbReference>
<dbReference type="SUPFAM" id="SSF55811">
    <property type="entry name" value="Nudix"/>
    <property type="match status" value="1"/>
</dbReference>
<dbReference type="PROSITE" id="PS51462">
    <property type="entry name" value="NUDIX"/>
    <property type="match status" value="1"/>
</dbReference>
<dbReference type="PROSITE" id="PS00893">
    <property type="entry name" value="NUDIX_BOX"/>
    <property type="match status" value="1"/>
</dbReference>